<proteinExistence type="evidence at protein level"/>
<feature type="chain" id="PRO_0000118824" description="Normal mucosa of esophagus-specific gene 1 protein">
    <location>
        <begin position="1"/>
        <end position="83"/>
    </location>
</feature>
<protein>
    <recommendedName>
        <fullName>Normal mucosa of esophagus-specific gene 1 protein</fullName>
    </recommendedName>
</protein>
<gene>
    <name type="primary">Nmes1</name>
</gene>
<dbReference type="EMBL" id="BC049633">
    <property type="protein sequence ID" value="AAH49633.1"/>
    <property type="molecule type" value="mRNA"/>
</dbReference>
<dbReference type="CCDS" id="CCDS38224.1"/>
<dbReference type="RefSeq" id="NP_001004174.1">
    <property type="nucleotide sequence ID" value="NM_001004174.1"/>
</dbReference>
<dbReference type="RefSeq" id="XP_006499936.1">
    <property type="nucleotide sequence ID" value="XM_006499873.3"/>
</dbReference>
<dbReference type="SMR" id="Q810Q5"/>
<dbReference type="FunCoup" id="Q810Q5">
    <property type="interactions" value="539"/>
</dbReference>
<dbReference type="STRING" id="10090.ENSMUSP00000040781"/>
<dbReference type="iPTMnet" id="Q810Q5"/>
<dbReference type="PhosphoSitePlus" id="Q810Q5"/>
<dbReference type="PaxDb" id="10090-ENSMUSP00000040781"/>
<dbReference type="ProteomicsDB" id="253086"/>
<dbReference type="Antibodypedia" id="56517">
    <property type="antibodies" value="33 antibodies from 9 providers"/>
</dbReference>
<dbReference type="DNASU" id="433470"/>
<dbReference type="Ensembl" id="ENSMUST00000047498.15">
    <property type="protein sequence ID" value="ENSMUSP00000040781.9"/>
    <property type="gene ID" value="ENSMUSG00000033213.17"/>
</dbReference>
<dbReference type="Ensembl" id="ENSMUST00000110512.4">
    <property type="protein sequence ID" value="ENSMUSP00000106141.4"/>
    <property type="gene ID" value="ENSMUSG00000033213.17"/>
</dbReference>
<dbReference type="GeneID" id="433470"/>
<dbReference type="KEGG" id="mmu:433470"/>
<dbReference type="UCSC" id="uc008may.1">
    <property type="organism name" value="mouse"/>
</dbReference>
<dbReference type="AGR" id="MGI:3034182"/>
<dbReference type="MGI" id="MGI:3034182">
    <property type="gene designation" value="AA467197"/>
</dbReference>
<dbReference type="VEuPathDB" id="HostDB:ENSMUSG00000033213"/>
<dbReference type="eggNOG" id="ENOG502STGR">
    <property type="taxonomic scope" value="Eukaryota"/>
</dbReference>
<dbReference type="GeneTree" id="ENSGT00390000009277"/>
<dbReference type="HOGENOM" id="CLU_178748_0_0_1"/>
<dbReference type="InParanoid" id="Q810Q5"/>
<dbReference type="OMA" id="CFTTRIT"/>
<dbReference type="OrthoDB" id="5511684at2759"/>
<dbReference type="PhylomeDB" id="Q810Q5"/>
<dbReference type="TreeFam" id="TF106383"/>
<dbReference type="BioGRID-ORCS" id="433470">
    <property type="hits" value="1 hit in 78 CRISPR screens"/>
</dbReference>
<dbReference type="ChiTaRS" id="AA467197">
    <property type="organism name" value="mouse"/>
</dbReference>
<dbReference type="PRO" id="PR:Q810Q5"/>
<dbReference type="Proteomes" id="UP000000589">
    <property type="component" value="Chromosome 2"/>
</dbReference>
<dbReference type="RNAct" id="Q810Q5">
    <property type="molecule type" value="protein"/>
</dbReference>
<dbReference type="Bgee" id="ENSMUSG00000033213">
    <property type="expression patterns" value="Expressed in embryonic cell in blastocyst and 48 other cell types or tissues"/>
</dbReference>
<dbReference type="ExpressionAtlas" id="Q810Q5">
    <property type="expression patterns" value="baseline and differential"/>
</dbReference>
<dbReference type="GO" id="GO:0005739">
    <property type="term" value="C:mitochondrion"/>
    <property type="evidence" value="ECO:0007005"/>
    <property type="project" value="MGI"/>
</dbReference>
<dbReference type="GO" id="GO:0005634">
    <property type="term" value="C:nucleus"/>
    <property type="evidence" value="ECO:0000250"/>
    <property type="project" value="UniProtKB"/>
</dbReference>
<dbReference type="GO" id="GO:0009617">
    <property type="term" value="P:response to bacterium"/>
    <property type="evidence" value="ECO:0000270"/>
    <property type="project" value="MGI"/>
</dbReference>
<dbReference type="InterPro" id="IPR010530">
    <property type="entry name" value="B12D"/>
</dbReference>
<dbReference type="PANTHER" id="PTHR14256">
    <property type="entry name" value="NADH-UBIQUINONE OXIDOREDUCTASE MLRQ SUBUNIT"/>
    <property type="match status" value="1"/>
</dbReference>
<dbReference type="PANTHER" id="PTHR14256:SF3">
    <property type="entry name" value="NORMAL MUCOSA OF ESOPHAGUS-SPECIFIC GENE 1 PROTEIN"/>
    <property type="match status" value="1"/>
</dbReference>
<dbReference type="Pfam" id="PF06522">
    <property type="entry name" value="B12D"/>
    <property type="match status" value="1"/>
</dbReference>
<name>NMES1_MOUSE</name>
<accession>Q810Q5</accession>
<sequence length="83" mass="9584">MGVFQILMKNKELIPLAFFISVAATGATSFALYALKKTDVVIDRKRNPEPWEMVDPTQPQKLITINQQWKPVEELQKVRRATR</sequence>
<evidence type="ECO:0000250" key="1"/>
<evidence type="ECO:0000269" key="2">
    <source>
    </source>
</evidence>
<evidence type="ECO:0000305" key="3"/>
<comment type="subcellular location">
    <subcellularLocation>
        <location evidence="1">Nucleus</location>
    </subcellularLocation>
</comment>
<comment type="tissue specificity">
    <text evidence="2">Strongly expressed in vertebrae, brain, intestine and stomach.</text>
</comment>
<comment type="developmental stage">
    <text evidence="2">First detected at 8 dpc in the ossification center and the spinal cord. From this stage up to birth, expression extends throughout the bone tissue and strong expression is detected in the vertebrae. At 16 dpc, detected in the developing brain, including the prosencephalon, mesencephalon, diencephalon, telencephalon and rhombencephalon, and in the intestine. Faint expression at 16 dpc in the lung.</text>
</comment>
<comment type="similarity">
    <text evidence="3">Belongs to the complex I NDUFA4 subunit family.</text>
</comment>
<reference key="1">
    <citation type="journal article" date="2004" name="Genome Res.">
        <title>The status, quality, and expansion of the NIH full-length cDNA project: the Mammalian Gene Collection (MGC).</title>
        <authorList>
            <consortium name="The MGC Project Team"/>
        </authorList>
    </citation>
    <scope>NUCLEOTIDE SEQUENCE [LARGE SCALE MRNA]</scope>
    <source>
        <tissue>Testis</tissue>
    </source>
</reference>
<reference key="2">
    <citation type="journal article" date="2002" name="Int. J. Cancer">
        <title>A novel gene, NMES1, downregulated in human esophageal squamous cell carcinoma.</title>
        <authorList>
            <person name="Zhou J."/>
            <person name="Wang H."/>
            <person name="Lu A."/>
            <person name="Hu G."/>
            <person name="Luo A."/>
            <person name="Ding F."/>
            <person name="Zhang J."/>
            <person name="Wang X."/>
            <person name="Wu M."/>
            <person name="Liu Z."/>
        </authorList>
    </citation>
    <scope>TISSUE SPECIFICITY</scope>
    <scope>DEVELOPMENTAL STAGE</scope>
</reference>
<reference key="3">
    <citation type="journal article" date="2010" name="Cell">
        <title>A tissue-specific atlas of mouse protein phosphorylation and expression.</title>
        <authorList>
            <person name="Huttlin E.L."/>
            <person name="Jedrychowski M.P."/>
            <person name="Elias J.E."/>
            <person name="Goswami T."/>
            <person name="Rad R."/>
            <person name="Beausoleil S.A."/>
            <person name="Villen J."/>
            <person name="Haas W."/>
            <person name="Sowa M.E."/>
            <person name="Gygi S.P."/>
        </authorList>
    </citation>
    <scope>IDENTIFICATION BY MASS SPECTROMETRY [LARGE SCALE ANALYSIS]</scope>
    <source>
        <tissue>Testis</tissue>
    </source>
</reference>
<keyword id="KW-0539">Nucleus</keyword>
<keyword id="KW-1185">Reference proteome</keyword>
<organism>
    <name type="scientific">Mus musculus</name>
    <name type="common">Mouse</name>
    <dbReference type="NCBI Taxonomy" id="10090"/>
    <lineage>
        <taxon>Eukaryota</taxon>
        <taxon>Metazoa</taxon>
        <taxon>Chordata</taxon>
        <taxon>Craniata</taxon>
        <taxon>Vertebrata</taxon>
        <taxon>Euteleostomi</taxon>
        <taxon>Mammalia</taxon>
        <taxon>Eutheria</taxon>
        <taxon>Euarchontoglires</taxon>
        <taxon>Glires</taxon>
        <taxon>Rodentia</taxon>
        <taxon>Myomorpha</taxon>
        <taxon>Muroidea</taxon>
        <taxon>Muridae</taxon>
        <taxon>Murinae</taxon>
        <taxon>Mus</taxon>
        <taxon>Mus</taxon>
    </lineage>
</organism>